<proteinExistence type="inferred from homology"/>
<organism>
    <name type="scientific">Sinorhizobium fredii (strain NBRC 101917 / NGR234)</name>
    <dbReference type="NCBI Taxonomy" id="394"/>
    <lineage>
        <taxon>Bacteria</taxon>
        <taxon>Pseudomonadati</taxon>
        <taxon>Pseudomonadota</taxon>
        <taxon>Alphaproteobacteria</taxon>
        <taxon>Hyphomicrobiales</taxon>
        <taxon>Rhizobiaceae</taxon>
        <taxon>Sinorhizobium/Ensifer group</taxon>
        <taxon>Sinorhizobium</taxon>
    </lineage>
</organism>
<name>Y4EA_SINFN</name>
<protein>
    <recommendedName>
        <fullName>Uncharacterized protein y4eA</fullName>
    </recommendedName>
</protein>
<gene>
    <name type="ordered locus">NGR_a03920</name>
    <name type="ORF">y4eA</name>
</gene>
<feature type="chain" id="PRO_0000200827" description="Uncharacterized protein y4eA">
    <location>
        <begin position="1"/>
        <end position="88"/>
    </location>
</feature>
<accession>P55424</accession>
<keyword id="KW-0614">Plasmid</keyword>
<keyword id="KW-1185">Reference proteome</keyword>
<evidence type="ECO:0000305" key="1"/>
<comment type="similarity">
    <text evidence="1">Belongs to the phD/YefM antitoxin family.</text>
</comment>
<sequence length="88" mass="9896">MPRPGGSYSTSDLSRKSGDIIAEALRHPVTITQRNKPRLVLLNIDDYERLMRQYDARSVGTLETLPGELLNEFEAAVDAYGETDETNR</sequence>
<dbReference type="EMBL" id="U00090">
    <property type="protein sequence ID" value="AAB92445.1"/>
    <property type="molecule type" value="Genomic_DNA"/>
</dbReference>
<dbReference type="RefSeq" id="NP_443834.1">
    <property type="nucleotide sequence ID" value="NC_000914.2"/>
</dbReference>
<dbReference type="RefSeq" id="WP_010875404.1">
    <property type="nucleotide sequence ID" value="NC_000914.2"/>
</dbReference>
<dbReference type="SMR" id="P55424"/>
<dbReference type="KEGG" id="rhi:NGR_a03920"/>
<dbReference type="PATRIC" id="fig|394.7.peg.413"/>
<dbReference type="eggNOG" id="COG2161">
    <property type="taxonomic scope" value="Bacteria"/>
</dbReference>
<dbReference type="HOGENOM" id="CLU_172502_0_0_5"/>
<dbReference type="OrthoDB" id="165038at2"/>
<dbReference type="Proteomes" id="UP000001054">
    <property type="component" value="Plasmid pNGR234a"/>
</dbReference>
<dbReference type="Gene3D" id="3.40.1620.10">
    <property type="entry name" value="YefM-like domain"/>
    <property type="match status" value="1"/>
</dbReference>
<dbReference type="InterPro" id="IPR006442">
    <property type="entry name" value="Antitoxin_Phd/YefM"/>
</dbReference>
<dbReference type="InterPro" id="IPR036165">
    <property type="entry name" value="YefM-like_sf"/>
</dbReference>
<dbReference type="NCBIfam" id="TIGR01552">
    <property type="entry name" value="phd_fam"/>
    <property type="match status" value="1"/>
</dbReference>
<dbReference type="Pfam" id="PF02604">
    <property type="entry name" value="PhdYeFM_antitox"/>
    <property type="match status" value="1"/>
</dbReference>
<dbReference type="SUPFAM" id="SSF143120">
    <property type="entry name" value="YefM-like"/>
    <property type="match status" value="1"/>
</dbReference>
<reference key="1">
    <citation type="journal article" date="1997" name="Nature">
        <title>Molecular basis of symbiosis between Rhizobium and legumes.</title>
        <authorList>
            <person name="Freiberg C.A."/>
            <person name="Fellay R."/>
            <person name="Bairoch A."/>
            <person name="Broughton W.J."/>
            <person name="Rosenthal A."/>
            <person name="Perret X."/>
        </authorList>
    </citation>
    <scope>NUCLEOTIDE SEQUENCE [LARGE SCALE GENOMIC DNA]</scope>
    <source>
        <strain>NBRC 101917 / NGR234</strain>
    </source>
</reference>
<reference key="2">
    <citation type="journal article" date="2009" name="Appl. Environ. Microbiol.">
        <title>Rhizobium sp. strain NGR234 possesses a remarkable number of secretion systems.</title>
        <authorList>
            <person name="Schmeisser C."/>
            <person name="Liesegang H."/>
            <person name="Krysciak D."/>
            <person name="Bakkou N."/>
            <person name="Le Quere A."/>
            <person name="Wollherr A."/>
            <person name="Heinemeyer I."/>
            <person name="Morgenstern B."/>
            <person name="Pommerening-Roeser A."/>
            <person name="Flores M."/>
            <person name="Palacios R."/>
            <person name="Brenner S."/>
            <person name="Gottschalk G."/>
            <person name="Schmitz R.A."/>
            <person name="Broughton W.J."/>
            <person name="Perret X."/>
            <person name="Strittmatter A.W."/>
            <person name="Streit W.R."/>
        </authorList>
    </citation>
    <scope>NUCLEOTIDE SEQUENCE [LARGE SCALE GENOMIC DNA]</scope>
    <source>
        <strain>NBRC 101917 / NGR234</strain>
    </source>
</reference>
<geneLocation type="plasmid">
    <name>sym pNGR234a</name>
</geneLocation>